<proteinExistence type="inferred from homology"/>
<organism>
    <name type="scientific">Haemophilus ducreyi (strain 35000HP / ATCC 700724)</name>
    <dbReference type="NCBI Taxonomy" id="233412"/>
    <lineage>
        <taxon>Bacteria</taxon>
        <taxon>Pseudomonadati</taxon>
        <taxon>Pseudomonadota</taxon>
        <taxon>Gammaproteobacteria</taxon>
        <taxon>Pasteurellales</taxon>
        <taxon>Pasteurellaceae</taxon>
        <taxon>Haemophilus</taxon>
    </lineage>
</organism>
<name>PURT_HAEDU</name>
<accession>Q7VNI4</accession>
<evidence type="ECO:0000255" key="1">
    <source>
        <dbReference type="HAMAP-Rule" id="MF_01643"/>
    </source>
</evidence>
<feature type="chain" id="PRO_0000319175" description="Formate-dependent phosphoribosylglycinamide formyltransferase">
    <location>
        <begin position="1"/>
        <end position="393"/>
    </location>
</feature>
<feature type="domain" description="ATP-grasp" evidence="1">
    <location>
        <begin position="119"/>
        <end position="308"/>
    </location>
</feature>
<feature type="binding site" evidence="1">
    <location>
        <begin position="22"/>
        <end position="23"/>
    </location>
    <ligand>
        <name>N(1)-(5-phospho-beta-D-ribosyl)glycinamide</name>
        <dbReference type="ChEBI" id="CHEBI:143788"/>
    </ligand>
</feature>
<feature type="binding site" evidence="1">
    <location>
        <position position="82"/>
    </location>
    <ligand>
        <name>N(1)-(5-phospho-beta-D-ribosyl)glycinamide</name>
        <dbReference type="ChEBI" id="CHEBI:143788"/>
    </ligand>
</feature>
<feature type="binding site" evidence="1">
    <location>
        <position position="114"/>
    </location>
    <ligand>
        <name>ATP</name>
        <dbReference type="ChEBI" id="CHEBI:30616"/>
    </ligand>
</feature>
<feature type="binding site" evidence="1">
    <location>
        <position position="155"/>
    </location>
    <ligand>
        <name>ATP</name>
        <dbReference type="ChEBI" id="CHEBI:30616"/>
    </ligand>
</feature>
<feature type="binding site" evidence="1">
    <location>
        <begin position="160"/>
        <end position="165"/>
    </location>
    <ligand>
        <name>ATP</name>
        <dbReference type="ChEBI" id="CHEBI:30616"/>
    </ligand>
</feature>
<feature type="binding site" evidence="1">
    <location>
        <begin position="195"/>
        <end position="198"/>
    </location>
    <ligand>
        <name>ATP</name>
        <dbReference type="ChEBI" id="CHEBI:30616"/>
    </ligand>
</feature>
<feature type="binding site" evidence="1">
    <location>
        <position position="203"/>
    </location>
    <ligand>
        <name>ATP</name>
        <dbReference type="ChEBI" id="CHEBI:30616"/>
    </ligand>
</feature>
<feature type="binding site" evidence="1">
    <location>
        <position position="267"/>
    </location>
    <ligand>
        <name>Mg(2+)</name>
        <dbReference type="ChEBI" id="CHEBI:18420"/>
    </ligand>
</feature>
<feature type="binding site" evidence="1">
    <location>
        <position position="279"/>
    </location>
    <ligand>
        <name>Mg(2+)</name>
        <dbReference type="ChEBI" id="CHEBI:18420"/>
    </ligand>
</feature>
<feature type="binding site" evidence="1">
    <location>
        <position position="286"/>
    </location>
    <ligand>
        <name>N(1)-(5-phospho-beta-D-ribosyl)glycinamide</name>
        <dbReference type="ChEBI" id="CHEBI:143788"/>
    </ligand>
</feature>
<feature type="binding site" evidence="1">
    <location>
        <position position="356"/>
    </location>
    <ligand>
        <name>N(1)-(5-phospho-beta-D-ribosyl)glycinamide</name>
        <dbReference type="ChEBI" id="CHEBI:143788"/>
    </ligand>
</feature>
<feature type="binding site" evidence="1">
    <location>
        <begin position="363"/>
        <end position="364"/>
    </location>
    <ligand>
        <name>N(1)-(5-phospho-beta-D-ribosyl)glycinamide</name>
        <dbReference type="ChEBI" id="CHEBI:143788"/>
    </ligand>
</feature>
<dbReference type="EC" id="6.3.1.21" evidence="1"/>
<dbReference type="EMBL" id="AE017143">
    <property type="protein sequence ID" value="AAP95486.1"/>
    <property type="molecule type" value="Genomic_DNA"/>
</dbReference>
<dbReference type="RefSeq" id="WP_010944539.1">
    <property type="nucleotide sequence ID" value="NC_002940.2"/>
</dbReference>
<dbReference type="SMR" id="Q7VNI4"/>
<dbReference type="STRING" id="233412.HD_0548"/>
<dbReference type="KEGG" id="hdu:HD_0548"/>
<dbReference type="eggNOG" id="COG0027">
    <property type="taxonomic scope" value="Bacteria"/>
</dbReference>
<dbReference type="HOGENOM" id="CLU_011534_1_3_6"/>
<dbReference type="OrthoDB" id="9804625at2"/>
<dbReference type="UniPathway" id="UPA00074">
    <property type="reaction ID" value="UER00127"/>
</dbReference>
<dbReference type="Proteomes" id="UP000001022">
    <property type="component" value="Chromosome"/>
</dbReference>
<dbReference type="GO" id="GO:0005829">
    <property type="term" value="C:cytosol"/>
    <property type="evidence" value="ECO:0007669"/>
    <property type="project" value="TreeGrafter"/>
</dbReference>
<dbReference type="GO" id="GO:0005524">
    <property type="term" value="F:ATP binding"/>
    <property type="evidence" value="ECO:0007669"/>
    <property type="project" value="UniProtKB-UniRule"/>
</dbReference>
<dbReference type="GO" id="GO:0000287">
    <property type="term" value="F:magnesium ion binding"/>
    <property type="evidence" value="ECO:0007669"/>
    <property type="project" value="InterPro"/>
</dbReference>
<dbReference type="GO" id="GO:0043815">
    <property type="term" value="F:phosphoribosylglycinamide formyltransferase 2 activity"/>
    <property type="evidence" value="ECO:0007669"/>
    <property type="project" value="UniProtKB-UniRule"/>
</dbReference>
<dbReference type="GO" id="GO:0004644">
    <property type="term" value="F:phosphoribosylglycinamide formyltransferase activity"/>
    <property type="evidence" value="ECO:0007669"/>
    <property type="project" value="InterPro"/>
</dbReference>
<dbReference type="GO" id="GO:0006189">
    <property type="term" value="P:'de novo' IMP biosynthetic process"/>
    <property type="evidence" value="ECO:0007669"/>
    <property type="project" value="UniProtKB-UniRule"/>
</dbReference>
<dbReference type="FunFam" id="3.30.1490.20:FF:000013">
    <property type="entry name" value="Formate-dependent phosphoribosylglycinamide formyltransferase"/>
    <property type="match status" value="1"/>
</dbReference>
<dbReference type="FunFam" id="3.30.470.20:FF:000027">
    <property type="entry name" value="Formate-dependent phosphoribosylglycinamide formyltransferase"/>
    <property type="match status" value="1"/>
</dbReference>
<dbReference type="FunFam" id="3.40.50.20:FF:000007">
    <property type="entry name" value="Formate-dependent phosphoribosylglycinamide formyltransferase"/>
    <property type="match status" value="1"/>
</dbReference>
<dbReference type="Gene3D" id="3.40.50.20">
    <property type="match status" value="1"/>
</dbReference>
<dbReference type="Gene3D" id="3.30.1490.20">
    <property type="entry name" value="ATP-grasp fold, A domain"/>
    <property type="match status" value="1"/>
</dbReference>
<dbReference type="Gene3D" id="3.30.470.20">
    <property type="entry name" value="ATP-grasp fold, B domain"/>
    <property type="match status" value="1"/>
</dbReference>
<dbReference type="HAMAP" id="MF_01643">
    <property type="entry name" value="PurT"/>
    <property type="match status" value="1"/>
</dbReference>
<dbReference type="InterPro" id="IPR011761">
    <property type="entry name" value="ATP-grasp"/>
</dbReference>
<dbReference type="InterPro" id="IPR003135">
    <property type="entry name" value="ATP-grasp_carboxylate-amine"/>
</dbReference>
<dbReference type="InterPro" id="IPR013815">
    <property type="entry name" value="ATP_grasp_subdomain_1"/>
</dbReference>
<dbReference type="InterPro" id="IPR016185">
    <property type="entry name" value="PreATP-grasp_dom_sf"/>
</dbReference>
<dbReference type="InterPro" id="IPR005862">
    <property type="entry name" value="PurT"/>
</dbReference>
<dbReference type="InterPro" id="IPR054350">
    <property type="entry name" value="PurT/PurK_preATP-grasp"/>
</dbReference>
<dbReference type="InterPro" id="IPR048740">
    <property type="entry name" value="PurT_C"/>
</dbReference>
<dbReference type="InterPro" id="IPR011054">
    <property type="entry name" value="Rudment_hybrid_motif"/>
</dbReference>
<dbReference type="NCBIfam" id="NF006766">
    <property type="entry name" value="PRK09288.1"/>
    <property type="match status" value="1"/>
</dbReference>
<dbReference type="NCBIfam" id="TIGR01142">
    <property type="entry name" value="purT"/>
    <property type="match status" value="1"/>
</dbReference>
<dbReference type="PANTHER" id="PTHR43055">
    <property type="entry name" value="FORMATE-DEPENDENT PHOSPHORIBOSYLGLYCINAMIDE FORMYLTRANSFERASE"/>
    <property type="match status" value="1"/>
</dbReference>
<dbReference type="PANTHER" id="PTHR43055:SF1">
    <property type="entry name" value="FORMATE-DEPENDENT PHOSPHORIBOSYLGLYCINAMIDE FORMYLTRANSFERASE"/>
    <property type="match status" value="1"/>
</dbReference>
<dbReference type="Pfam" id="PF02222">
    <property type="entry name" value="ATP-grasp"/>
    <property type="match status" value="1"/>
</dbReference>
<dbReference type="Pfam" id="PF21244">
    <property type="entry name" value="PurT_C"/>
    <property type="match status" value="1"/>
</dbReference>
<dbReference type="Pfam" id="PF22660">
    <property type="entry name" value="RS_preATP-grasp-like"/>
    <property type="match status" value="1"/>
</dbReference>
<dbReference type="SUPFAM" id="SSF56059">
    <property type="entry name" value="Glutathione synthetase ATP-binding domain-like"/>
    <property type="match status" value="1"/>
</dbReference>
<dbReference type="SUPFAM" id="SSF52440">
    <property type="entry name" value="PreATP-grasp domain"/>
    <property type="match status" value="1"/>
</dbReference>
<dbReference type="SUPFAM" id="SSF51246">
    <property type="entry name" value="Rudiment single hybrid motif"/>
    <property type="match status" value="1"/>
</dbReference>
<dbReference type="PROSITE" id="PS50975">
    <property type="entry name" value="ATP_GRASP"/>
    <property type="match status" value="1"/>
</dbReference>
<sequence>MTTMGTPLTPNATKVMMLGSGELGKEVVIELQRLGVEVIAVDRYANAPAQQVAHRAYTISMLDDDALRAVVEQEKPDFIVPEVEAIATETLVELEQKGYQVVPTAKATQLTMNREGIRRLAAEELGLPTSPYRFVDNFADFQQAVLAVGVPCVVKPIMSSSGHGQSIIKSLDQIQQAWDYSQAGGRAGGGRVIVEGFIKFDYEITLLTVRHINGTSFLAPIGHRQQNGDYRESWQPQAMSEVALQKAQQIAERITTALGGRGIFGVELFVCGDDIIFNEVSPRPHDTGMVTMASQELSQFALHARAILGLPIPHIEQFGPAASKAIVVEGKSNNVMFVGLDKVLEERGTHIRLFGKAEVNGHRRLGVILARDESTDKALAKVERAYANLTVKL</sequence>
<gene>
    <name evidence="1" type="primary">purT</name>
    <name type="ordered locus">HD_0548</name>
</gene>
<comment type="function">
    <text evidence="1">Involved in the de novo purine biosynthesis. Catalyzes the transfer of formate to 5-phospho-ribosyl-glycinamide (GAR), producing 5-phospho-ribosyl-N-formylglycinamide (FGAR). Formate is provided by PurU via hydrolysis of 10-formyl-tetrahydrofolate.</text>
</comment>
<comment type="catalytic activity">
    <reaction evidence="1">
        <text>N(1)-(5-phospho-beta-D-ribosyl)glycinamide + formate + ATP = N(2)-formyl-N(1)-(5-phospho-beta-D-ribosyl)glycinamide + ADP + phosphate + H(+)</text>
        <dbReference type="Rhea" id="RHEA:24829"/>
        <dbReference type="ChEBI" id="CHEBI:15378"/>
        <dbReference type="ChEBI" id="CHEBI:15740"/>
        <dbReference type="ChEBI" id="CHEBI:30616"/>
        <dbReference type="ChEBI" id="CHEBI:43474"/>
        <dbReference type="ChEBI" id="CHEBI:143788"/>
        <dbReference type="ChEBI" id="CHEBI:147286"/>
        <dbReference type="ChEBI" id="CHEBI:456216"/>
        <dbReference type="EC" id="6.3.1.21"/>
    </reaction>
    <physiologicalReaction direction="left-to-right" evidence="1">
        <dbReference type="Rhea" id="RHEA:24830"/>
    </physiologicalReaction>
</comment>
<comment type="pathway">
    <text evidence="1">Purine metabolism; IMP biosynthesis via de novo pathway; N(2)-formyl-N(1)-(5-phospho-D-ribosyl)glycinamide from N(1)-(5-phospho-D-ribosyl)glycinamide (formate route): step 1/1.</text>
</comment>
<comment type="subunit">
    <text evidence="1">Homodimer.</text>
</comment>
<comment type="similarity">
    <text evidence="1">Belongs to the PurK/PurT family.</text>
</comment>
<reference key="1">
    <citation type="submission" date="2003-06" db="EMBL/GenBank/DDBJ databases">
        <title>The complete genome sequence of Haemophilus ducreyi.</title>
        <authorList>
            <person name="Munson R.S. Jr."/>
            <person name="Ray W.C."/>
            <person name="Mahairas G."/>
            <person name="Sabo P."/>
            <person name="Mungur R."/>
            <person name="Johnson L."/>
            <person name="Nguyen D."/>
            <person name="Wang J."/>
            <person name="Forst C."/>
            <person name="Hood L."/>
        </authorList>
    </citation>
    <scope>NUCLEOTIDE SEQUENCE [LARGE SCALE GENOMIC DNA]</scope>
    <source>
        <strain>35000HP / ATCC 700724</strain>
    </source>
</reference>
<protein>
    <recommendedName>
        <fullName evidence="1">Formate-dependent phosphoribosylglycinamide formyltransferase</fullName>
        <ecNumber evidence="1">6.3.1.21</ecNumber>
    </recommendedName>
    <alternativeName>
        <fullName evidence="1">5'-phosphoribosylglycinamide transformylase 2</fullName>
    </alternativeName>
    <alternativeName>
        <fullName evidence="1">Formate-dependent GAR transformylase</fullName>
    </alternativeName>
    <alternativeName>
        <fullName evidence="1">GAR transformylase 2</fullName>
        <shortName evidence="1">GART 2</shortName>
    </alternativeName>
    <alternativeName>
        <fullName evidence="1">Non-folate glycinamide ribonucleotide transformylase</fullName>
    </alternativeName>
    <alternativeName>
        <fullName evidence="1">Phosphoribosylglycinamide formyltransferase 2</fullName>
    </alternativeName>
</protein>
<keyword id="KW-0067">ATP-binding</keyword>
<keyword id="KW-0436">Ligase</keyword>
<keyword id="KW-0460">Magnesium</keyword>
<keyword id="KW-0479">Metal-binding</keyword>
<keyword id="KW-0547">Nucleotide-binding</keyword>
<keyword id="KW-0658">Purine biosynthesis</keyword>
<keyword id="KW-1185">Reference proteome</keyword>